<gene>
    <name evidence="1" type="primary">rplN</name>
    <name type="ordered locus">Rxyl_2145</name>
</gene>
<name>RL14_RUBXD</name>
<reference key="1">
    <citation type="submission" date="2006-06" db="EMBL/GenBank/DDBJ databases">
        <title>Complete sequence of Rubrobacter xylanophilus DSM 9941.</title>
        <authorList>
            <consortium name="US DOE Joint Genome Institute"/>
            <person name="Copeland A."/>
            <person name="Lucas S."/>
            <person name="Lapidus A."/>
            <person name="Barry K."/>
            <person name="Detter J.C."/>
            <person name="Glavina del Rio T."/>
            <person name="Hammon N."/>
            <person name="Israni S."/>
            <person name="Dalin E."/>
            <person name="Tice H."/>
            <person name="Pitluck S."/>
            <person name="Munk A.C."/>
            <person name="Brettin T."/>
            <person name="Bruce D."/>
            <person name="Han C."/>
            <person name="Tapia R."/>
            <person name="Gilna P."/>
            <person name="Schmutz J."/>
            <person name="Larimer F."/>
            <person name="Land M."/>
            <person name="Hauser L."/>
            <person name="Kyrpides N."/>
            <person name="Lykidis A."/>
            <person name="da Costa M.S."/>
            <person name="Rainey F.A."/>
            <person name="Empadinhas N."/>
            <person name="Jolivet E."/>
            <person name="Battista J.R."/>
            <person name="Richardson P."/>
        </authorList>
    </citation>
    <scope>NUCLEOTIDE SEQUENCE [LARGE SCALE GENOMIC DNA]</scope>
    <source>
        <strain>DSM 9941 / JCM 11954 / NBRC 16129 / PRD-1</strain>
    </source>
</reference>
<evidence type="ECO:0000255" key="1">
    <source>
        <dbReference type="HAMAP-Rule" id="MF_01367"/>
    </source>
</evidence>
<evidence type="ECO:0000305" key="2"/>
<dbReference type="EMBL" id="CP000386">
    <property type="protein sequence ID" value="ABG05089.1"/>
    <property type="molecule type" value="Genomic_DNA"/>
</dbReference>
<dbReference type="RefSeq" id="WP_011565104.1">
    <property type="nucleotide sequence ID" value="NC_008148.1"/>
</dbReference>
<dbReference type="SMR" id="Q1AU39"/>
<dbReference type="STRING" id="266117.Rxyl_2145"/>
<dbReference type="KEGG" id="rxy:Rxyl_2145"/>
<dbReference type="eggNOG" id="COG0093">
    <property type="taxonomic scope" value="Bacteria"/>
</dbReference>
<dbReference type="HOGENOM" id="CLU_095071_2_1_11"/>
<dbReference type="OrthoDB" id="9806379at2"/>
<dbReference type="PhylomeDB" id="Q1AU39"/>
<dbReference type="Proteomes" id="UP000006637">
    <property type="component" value="Chromosome"/>
</dbReference>
<dbReference type="GO" id="GO:0022625">
    <property type="term" value="C:cytosolic large ribosomal subunit"/>
    <property type="evidence" value="ECO:0007669"/>
    <property type="project" value="TreeGrafter"/>
</dbReference>
<dbReference type="GO" id="GO:0070180">
    <property type="term" value="F:large ribosomal subunit rRNA binding"/>
    <property type="evidence" value="ECO:0007669"/>
    <property type="project" value="TreeGrafter"/>
</dbReference>
<dbReference type="GO" id="GO:0003735">
    <property type="term" value="F:structural constituent of ribosome"/>
    <property type="evidence" value="ECO:0007669"/>
    <property type="project" value="InterPro"/>
</dbReference>
<dbReference type="GO" id="GO:0006412">
    <property type="term" value="P:translation"/>
    <property type="evidence" value="ECO:0007669"/>
    <property type="project" value="UniProtKB-UniRule"/>
</dbReference>
<dbReference type="CDD" id="cd00337">
    <property type="entry name" value="Ribosomal_uL14"/>
    <property type="match status" value="1"/>
</dbReference>
<dbReference type="FunFam" id="2.40.150.20:FF:000001">
    <property type="entry name" value="50S ribosomal protein L14"/>
    <property type="match status" value="1"/>
</dbReference>
<dbReference type="Gene3D" id="2.40.150.20">
    <property type="entry name" value="Ribosomal protein L14"/>
    <property type="match status" value="1"/>
</dbReference>
<dbReference type="HAMAP" id="MF_01367">
    <property type="entry name" value="Ribosomal_uL14"/>
    <property type="match status" value="1"/>
</dbReference>
<dbReference type="InterPro" id="IPR000218">
    <property type="entry name" value="Ribosomal_uL14"/>
</dbReference>
<dbReference type="InterPro" id="IPR005745">
    <property type="entry name" value="Ribosomal_uL14_bac-type"/>
</dbReference>
<dbReference type="InterPro" id="IPR019972">
    <property type="entry name" value="Ribosomal_uL14_CS"/>
</dbReference>
<dbReference type="InterPro" id="IPR036853">
    <property type="entry name" value="Ribosomal_uL14_sf"/>
</dbReference>
<dbReference type="NCBIfam" id="TIGR01067">
    <property type="entry name" value="rplN_bact"/>
    <property type="match status" value="1"/>
</dbReference>
<dbReference type="PANTHER" id="PTHR11761">
    <property type="entry name" value="50S/60S RIBOSOMAL PROTEIN L14/L23"/>
    <property type="match status" value="1"/>
</dbReference>
<dbReference type="PANTHER" id="PTHR11761:SF3">
    <property type="entry name" value="LARGE RIBOSOMAL SUBUNIT PROTEIN UL14M"/>
    <property type="match status" value="1"/>
</dbReference>
<dbReference type="Pfam" id="PF00238">
    <property type="entry name" value="Ribosomal_L14"/>
    <property type="match status" value="1"/>
</dbReference>
<dbReference type="SMART" id="SM01374">
    <property type="entry name" value="Ribosomal_L14"/>
    <property type="match status" value="1"/>
</dbReference>
<dbReference type="SUPFAM" id="SSF50193">
    <property type="entry name" value="Ribosomal protein L14"/>
    <property type="match status" value="1"/>
</dbReference>
<dbReference type="PROSITE" id="PS00049">
    <property type="entry name" value="RIBOSOMAL_L14"/>
    <property type="match status" value="1"/>
</dbReference>
<feature type="chain" id="PRO_1000055692" description="Large ribosomal subunit protein uL14">
    <location>
        <begin position="1"/>
        <end position="122"/>
    </location>
</feature>
<keyword id="KW-1185">Reference proteome</keyword>
<keyword id="KW-0687">Ribonucleoprotein</keyword>
<keyword id="KW-0689">Ribosomal protein</keyword>
<keyword id="KW-0694">RNA-binding</keyword>
<keyword id="KW-0699">rRNA-binding</keyword>
<organism>
    <name type="scientific">Rubrobacter xylanophilus (strain DSM 9941 / JCM 11954 / NBRC 16129 / PRD-1)</name>
    <dbReference type="NCBI Taxonomy" id="266117"/>
    <lineage>
        <taxon>Bacteria</taxon>
        <taxon>Bacillati</taxon>
        <taxon>Actinomycetota</taxon>
        <taxon>Rubrobacteria</taxon>
        <taxon>Rubrobacterales</taxon>
        <taxon>Rubrobacteraceae</taxon>
        <taxon>Rubrobacter</taxon>
    </lineage>
</organism>
<accession>Q1AU39</accession>
<proteinExistence type="inferred from homology"/>
<sequence length="122" mass="13105">MIQQETRLKVADNSGARSLLCIRVLGGSKRRSAGIGDVIVASVKEATPGGAVKKGDVVRAVVVRTKKETRREDGSYIRFGENAGVLINSDGSPRGTRIFGPVARELREKGYTRIISLAPEVL</sequence>
<protein>
    <recommendedName>
        <fullName evidence="1">Large ribosomal subunit protein uL14</fullName>
    </recommendedName>
    <alternativeName>
        <fullName evidence="2">50S ribosomal protein L14</fullName>
    </alternativeName>
</protein>
<comment type="function">
    <text evidence="1">Binds to 23S rRNA. Forms part of two intersubunit bridges in the 70S ribosome.</text>
</comment>
<comment type="subunit">
    <text evidence="1">Part of the 50S ribosomal subunit. Forms a cluster with proteins L3 and L19. In the 70S ribosome, L14 and L19 interact and together make contacts with the 16S rRNA in bridges B5 and B8.</text>
</comment>
<comment type="similarity">
    <text evidence="1">Belongs to the universal ribosomal protein uL14 family.</text>
</comment>